<protein>
    <recommendedName>
        <fullName evidence="1">2,3-bisphosphoglycerate-independent phosphoglycerate mutase</fullName>
        <shortName evidence="1">BPG-independent PGAM</shortName>
        <shortName evidence="1">Phosphoglyceromutase</shortName>
        <shortName evidence="1">iPGM</shortName>
        <ecNumber evidence="1">5.4.2.12</ecNumber>
    </recommendedName>
</protein>
<name>GPMI_NOSS1</name>
<reference key="1">
    <citation type="journal article" date="2001" name="DNA Res.">
        <title>Complete genomic sequence of the filamentous nitrogen-fixing cyanobacterium Anabaena sp. strain PCC 7120.</title>
        <authorList>
            <person name="Kaneko T."/>
            <person name="Nakamura Y."/>
            <person name="Wolk C.P."/>
            <person name="Kuritz T."/>
            <person name="Sasamoto S."/>
            <person name="Watanabe A."/>
            <person name="Iriguchi M."/>
            <person name="Ishikawa A."/>
            <person name="Kawashima K."/>
            <person name="Kimura T."/>
            <person name="Kishida Y."/>
            <person name="Kohara M."/>
            <person name="Matsumoto M."/>
            <person name="Matsuno A."/>
            <person name="Muraki A."/>
            <person name="Nakazaki N."/>
            <person name="Shimpo S."/>
            <person name="Sugimoto M."/>
            <person name="Takazawa M."/>
            <person name="Yamada M."/>
            <person name="Yasuda M."/>
            <person name="Tabata S."/>
        </authorList>
    </citation>
    <scope>NUCLEOTIDE SEQUENCE [LARGE SCALE GENOMIC DNA]</scope>
    <source>
        <strain>PCC 7120 / SAG 25.82 / UTEX 2576</strain>
    </source>
</reference>
<gene>
    <name evidence="1" type="primary">gpmI</name>
    <name type="ordered locus">all4182</name>
</gene>
<sequence length="533" mass="57677">MTKAPVAPVVLVILDGWGYCEETRGNAIAAAKTPVMESLWTAYPHTLIHTSGKAVGLPEGQMGNSEVGHLNIGAGRVVPQELVRISDAVEDGSILSNSALVKICQEVRNRNGKLHLVGLCSEGGVHSHITHLFGLLDLAKEQRISEVCIHAITDGRDTAPTDGINAISALEDYINHVGIGRIVTVSGRYYAMDRDRRWDRVQRAYDVMTQDGVGDGRKAVDVLQASYAEGVNDEFIVPVRIAPGTVEPGDGVIFFNFRPDRSRQLTQAFVSPEFTGFARQQIKPLSFVTFTQYDSDLSVSVAFEPQNLTNILGEVIANQGLNQFRTAETEKYAHVTYFFNGGLEEPFAGEDRELVSSPMVATYDKAPAMSATAVTDTAIAAIQKGIYSLIVINYANPDMVGHTGQIEPTIKAIETVDRCLGRLLEGVSKAGGTTIITADHGNAEYMLDEAGNSWTAHTTNPVPLILVEGEKVKIPGYGTNVELRSDGKLADIAPTILDILQLPQPPEMTGRSLLQPAEYEVELSRTPIPVGLN</sequence>
<keyword id="KW-0324">Glycolysis</keyword>
<keyword id="KW-0413">Isomerase</keyword>
<keyword id="KW-0464">Manganese</keyword>
<keyword id="KW-0479">Metal-binding</keyword>
<keyword id="KW-1185">Reference proteome</keyword>
<organism>
    <name type="scientific">Nostoc sp. (strain PCC 7120 / SAG 25.82 / UTEX 2576)</name>
    <dbReference type="NCBI Taxonomy" id="103690"/>
    <lineage>
        <taxon>Bacteria</taxon>
        <taxon>Bacillati</taxon>
        <taxon>Cyanobacteriota</taxon>
        <taxon>Cyanophyceae</taxon>
        <taxon>Nostocales</taxon>
        <taxon>Nostocaceae</taxon>
        <taxon>Nostoc</taxon>
    </lineage>
</organism>
<dbReference type="EC" id="5.4.2.12" evidence="1"/>
<dbReference type="EMBL" id="BA000019">
    <property type="protein sequence ID" value="BAB75881.1"/>
    <property type="molecule type" value="Genomic_DNA"/>
</dbReference>
<dbReference type="PIR" id="AG2328">
    <property type="entry name" value="AG2328"/>
</dbReference>
<dbReference type="RefSeq" id="WP_010998321.1">
    <property type="nucleotide sequence ID" value="NZ_RSCN01000010.1"/>
</dbReference>
<dbReference type="SMR" id="Q8YPL2"/>
<dbReference type="STRING" id="103690.gene:10496231"/>
<dbReference type="KEGG" id="ana:all4182"/>
<dbReference type="eggNOG" id="COG0696">
    <property type="taxonomic scope" value="Bacteria"/>
</dbReference>
<dbReference type="OrthoDB" id="9800863at2"/>
<dbReference type="UniPathway" id="UPA00109">
    <property type="reaction ID" value="UER00186"/>
</dbReference>
<dbReference type="Proteomes" id="UP000002483">
    <property type="component" value="Chromosome"/>
</dbReference>
<dbReference type="GO" id="GO:0005829">
    <property type="term" value="C:cytosol"/>
    <property type="evidence" value="ECO:0007669"/>
    <property type="project" value="TreeGrafter"/>
</dbReference>
<dbReference type="GO" id="GO:0030145">
    <property type="term" value="F:manganese ion binding"/>
    <property type="evidence" value="ECO:0007669"/>
    <property type="project" value="UniProtKB-UniRule"/>
</dbReference>
<dbReference type="GO" id="GO:0004619">
    <property type="term" value="F:phosphoglycerate mutase activity"/>
    <property type="evidence" value="ECO:0007669"/>
    <property type="project" value="UniProtKB-EC"/>
</dbReference>
<dbReference type="GO" id="GO:0006007">
    <property type="term" value="P:glucose catabolic process"/>
    <property type="evidence" value="ECO:0007669"/>
    <property type="project" value="InterPro"/>
</dbReference>
<dbReference type="GO" id="GO:0006096">
    <property type="term" value="P:glycolytic process"/>
    <property type="evidence" value="ECO:0007669"/>
    <property type="project" value="UniProtKB-UniRule"/>
</dbReference>
<dbReference type="CDD" id="cd16010">
    <property type="entry name" value="iPGM"/>
    <property type="match status" value="1"/>
</dbReference>
<dbReference type="FunFam" id="3.40.1450.10:FF:000002">
    <property type="entry name" value="2,3-bisphosphoglycerate-independent phosphoglycerate mutase"/>
    <property type="match status" value="1"/>
</dbReference>
<dbReference type="Gene3D" id="3.40.720.10">
    <property type="entry name" value="Alkaline Phosphatase, subunit A"/>
    <property type="match status" value="1"/>
</dbReference>
<dbReference type="Gene3D" id="3.40.1450.10">
    <property type="entry name" value="BPG-independent phosphoglycerate mutase, domain B"/>
    <property type="match status" value="1"/>
</dbReference>
<dbReference type="HAMAP" id="MF_01038">
    <property type="entry name" value="GpmI"/>
    <property type="match status" value="1"/>
</dbReference>
<dbReference type="InterPro" id="IPR017850">
    <property type="entry name" value="Alkaline_phosphatase_core_sf"/>
</dbReference>
<dbReference type="InterPro" id="IPR011258">
    <property type="entry name" value="BPG-indep_PGM_N"/>
</dbReference>
<dbReference type="InterPro" id="IPR006124">
    <property type="entry name" value="Metalloenzyme"/>
</dbReference>
<dbReference type="InterPro" id="IPR036646">
    <property type="entry name" value="PGAM_B_sf"/>
</dbReference>
<dbReference type="InterPro" id="IPR005995">
    <property type="entry name" value="Pgm_bpd_ind"/>
</dbReference>
<dbReference type="NCBIfam" id="TIGR01307">
    <property type="entry name" value="pgm_bpd_ind"/>
    <property type="match status" value="1"/>
</dbReference>
<dbReference type="PANTHER" id="PTHR31637">
    <property type="entry name" value="2,3-BISPHOSPHOGLYCERATE-INDEPENDENT PHOSPHOGLYCERATE MUTASE"/>
    <property type="match status" value="1"/>
</dbReference>
<dbReference type="PANTHER" id="PTHR31637:SF0">
    <property type="entry name" value="2,3-BISPHOSPHOGLYCERATE-INDEPENDENT PHOSPHOGLYCERATE MUTASE"/>
    <property type="match status" value="1"/>
</dbReference>
<dbReference type="Pfam" id="PF06415">
    <property type="entry name" value="iPGM_N"/>
    <property type="match status" value="1"/>
</dbReference>
<dbReference type="Pfam" id="PF01676">
    <property type="entry name" value="Metalloenzyme"/>
    <property type="match status" value="1"/>
</dbReference>
<dbReference type="PIRSF" id="PIRSF001492">
    <property type="entry name" value="IPGAM"/>
    <property type="match status" value="1"/>
</dbReference>
<dbReference type="SUPFAM" id="SSF64158">
    <property type="entry name" value="2,3-Bisphosphoglycerate-independent phosphoglycerate mutase, substrate-binding domain"/>
    <property type="match status" value="1"/>
</dbReference>
<dbReference type="SUPFAM" id="SSF53649">
    <property type="entry name" value="Alkaline phosphatase-like"/>
    <property type="match status" value="1"/>
</dbReference>
<evidence type="ECO:0000255" key="1">
    <source>
        <dbReference type="HAMAP-Rule" id="MF_01038"/>
    </source>
</evidence>
<feature type="chain" id="PRO_0000212117" description="2,3-bisphosphoglycerate-independent phosphoglycerate mutase">
    <location>
        <begin position="1"/>
        <end position="533"/>
    </location>
</feature>
<feature type="active site" description="Phosphoserine intermediate" evidence="1">
    <location>
        <position position="65"/>
    </location>
</feature>
<feature type="binding site" evidence="1">
    <location>
        <position position="15"/>
    </location>
    <ligand>
        <name>Mn(2+)</name>
        <dbReference type="ChEBI" id="CHEBI:29035"/>
        <label>2</label>
    </ligand>
</feature>
<feature type="binding site" evidence="1">
    <location>
        <position position="65"/>
    </location>
    <ligand>
        <name>Mn(2+)</name>
        <dbReference type="ChEBI" id="CHEBI:29035"/>
        <label>2</label>
    </ligand>
</feature>
<feature type="binding site" evidence="1">
    <location>
        <position position="126"/>
    </location>
    <ligand>
        <name>substrate</name>
    </ligand>
</feature>
<feature type="binding site" evidence="1">
    <location>
        <begin position="156"/>
        <end position="157"/>
    </location>
    <ligand>
        <name>substrate</name>
    </ligand>
</feature>
<feature type="binding site" evidence="1">
    <location>
        <position position="188"/>
    </location>
    <ligand>
        <name>substrate</name>
    </ligand>
</feature>
<feature type="binding site" evidence="1">
    <location>
        <position position="194"/>
    </location>
    <ligand>
        <name>substrate</name>
    </ligand>
</feature>
<feature type="binding site" evidence="1">
    <location>
        <begin position="258"/>
        <end position="261"/>
    </location>
    <ligand>
        <name>substrate</name>
    </ligand>
</feature>
<feature type="binding site" evidence="1">
    <location>
        <position position="331"/>
    </location>
    <ligand>
        <name>substrate</name>
    </ligand>
</feature>
<feature type="binding site" evidence="1">
    <location>
        <position position="398"/>
    </location>
    <ligand>
        <name>Mn(2+)</name>
        <dbReference type="ChEBI" id="CHEBI:29035"/>
        <label>1</label>
    </ligand>
</feature>
<feature type="binding site" evidence="1">
    <location>
        <position position="402"/>
    </location>
    <ligand>
        <name>Mn(2+)</name>
        <dbReference type="ChEBI" id="CHEBI:29035"/>
        <label>1</label>
    </ligand>
</feature>
<feature type="binding site" evidence="1">
    <location>
        <position position="439"/>
    </location>
    <ligand>
        <name>Mn(2+)</name>
        <dbReference type="ChEBI" id="CHEBI:29035"/>
        <label>2</label>
    </ligand>
</feature>
<feature type="binding site" evidence="1">
    <location>
        <position position="440"/>
    </location>
    <ligand>
        <name>Mn(2+)</name>
        <dbReference type="ChEBI" id="CHEBI:29035"/>
        <label>2</label>
    </ligand>
</feature>
<feature type="binding site" evidence="1">
    <location>
        <position position="457"/>
    </location>
    <ligand>
        <name>Mn(2+)</name>
        <dbReference type="ChEBI" id="CHEBI:29035"/>
        <label>1</label>
    </ligand>
</feature>
<proteinExistence type="inferred from homology"/>
<comment type="function">
    <text evidence="1">Catalyzes the interconversion of 2-phosphoglycerate and 3-phosphoglycerate.</text>
</comment>
<comment type="catalytic activity">
    <reaction evidence="1">
        <text>(2R)-2-phosphoglycerate = (2R)-3-phosphoglycerate</text>
        <dbReference type="Rhea" id="RHEA:15901"/>
        <dbReference type="ChEBI" id="CHEBI:58272"/>
        <dbReference type="ChEBI" id="CHEBI:58289"/>
        <dbReference type="EC" id="5.4.2.12"/>
    </reaction>
</comment>
<comment type="cofactor">
    <cofactor evidence="1">
        <name>Mn(2+)</name>
        <dbReference type="ChEBI" id="CHEBI:29035"/>
    </cofactor>
    <text evidence="1">Binds 2 manganese ions per subunit.</text>
</comment>
<comment type="pathway">
    <text evidence="1">Carbohydrate degradation; glycolysis; pyruvate from D-glyceraldehyde 3-phosphate: step 3/5.</text>
</comment>
<comment type="subunit">
    <text evidence="1">Monomer.</text>
</comment>
<comment type="similarity">
    <text evidence="1">Belongs to the BPG-independent phosphoglycerate mutase family.</text>
</comment>
<accession>Q8YPL2</accession>